<evidence type="ECO:0000250" key="1">
    <source>
        <dbReference type="UniProtKB" id="P06130"/>
    </source>
</evidence>
<evidence type="ECO:0000255" key="2">
    <source>
        <dbReference type="PROSITE-ProRule" id="PRU00711"/>
    </source>
</evidence>
<evidence type="ECO:0000269" key="3">
    <source>
    </source>
</evidence>
<evidence type="ECO:0000269" key="4">
    <source>
    </source>
</evidence>
<evidence type="ECO:0000303" key="5">
    <source>
    </source>
</evidence>
<evidence type="ECO:0000305" key="6"/>
<evidence type="ECO:0000305" key="7">
    <source>
    </source>
</evidence>
<evidence type="ECO:0000312" key="8">
    <source>
        <dbReference type="EMBL" id="CAF29695.1"/>
    </source>
</evidence>
<dbReference type="EC" id="1.17.98.3" evidence="7"/>
<dbReference type="EMBL" id="BX950229">
    <property type="protein sequence ID" value="CAF29695.1"/>
    <property type="molecule type" value="Genomic_DNA"/>
</dbReference>
<dbReference type="RefSeq" id="WP_011170083.1">
    <property type="nucleotide sequence ID" value="NC_005791.1"/>
</dbReference>
<dbReference type="SMR" id="F1SVF6"/>
<dbReference type="STRING" id="267377.MMP0139"/>
<dbReference type="DNASU" id="2762396"/>
<dbReference type="EnsemblBacteria" id="CAF29695">
    <property type="protein sequence ID" value="CAF29695"/>
    <property type="gene ID" value="MMP0139"/>
</dbReference>
<dbReference type="GeneID" id="2762396"/>
<dbReference type="KEGG" id="mmp:MMP0139"/>
<dbReference type="PATRIC" id="fig|267377.15.peg.142"/>
<dbReference type="eggNOG" id="arCOG02653">
    <property type="taxonomic scope" value="Archaea"/>
</dbReference>
<dbReference type="HOGENOM" id="CLU_063409_0_0_2"/>
<dbReference type="OrthoDB" id="35334at2157"/>
<dbReference type="Proteomes" id="UP000000590">
    <property type="component" value="Chromosome"/>
</dbReference>
<dbReference type="GO" id="GO:0051539">
    <property type="term" value="F:4 iron, 4 sulfur cluster binding"/>
    <property type="evidence" value="ECO:0007669"/>
    <property type="project" value="UniProtKB-KW"/>
</dbReference>
<dbReference type="GO" id="GO:0043794">
    <property type="term" value="F:formate dehydrogenase (coenzyme F420) activity"/>
    <property type="evidence" value="ECO:0007669"/>
    <property type="project" value="RHEA"/>
</dbReference>
<dbReference type="GO" id="GO:0046872">
    <property type="term" value="F:metal ion binding"/>
    <property type="evidence" value="ECO:0007669"/>
    <property type="project" value="UniProtKB-KW"/>
</dbReference>
<dbReference type="GO" id="GO:0052592">
    <property type="term" value="F:oxidoreductase activity, acting on CH or CH2 groups, with an iron-sulfur protein as acceptor"/>
    <property type="evidence" value="ECO:0007669"/>
    <property type="project" value="TreeGrafter"/>
</dbReference>
<dbReference type="Gene3D" id="1.10.1060.10">
    <property type="entry name" value="Alpha-helical ferredoxin"/>
    <property type="match status" value="1"/>
</dbReference>
<dbReference type="InterPro" id="IPR017896">
    <property type="entry name" value="4Fe4S_Fe-S-bd"/>
</dbReference>
<dbReference type="InterPro" id="IPR017900">
    <property type="entry name" value="4Fe4S_Fe_S_CS"/>
</dbReference>
<dbReference type="InterPro" id="IPR007516">
    <property type="entry name" value="Co_F420_Hydgase/DH_bsu_N"/>
</dbReference>
<dbReference type="InterPro" id="IPR045220">
    <property type="entry name" value="FRHB/FDHB/HCAR-like"/>
</dbReference>
<dbReference type="InterPro" id="IPR007525">
    <property type="entry name" value="FrhB_FdhB_C"/>
</dbReference>
<dbReference type="InterPro" id="IPR009051">
    <property type="entry name" value="Helical_ferredxn"/>
</dbReference>
<dbReference type="PANTHER" id="PTHR31332">
    <property type="entry name" value="7-HYDROXYMETHYL CHLOROPHYLL A REDUCTASE, CHLOROPLASTIC"/>
    <property type="match status" value="1"/>
</dbReference>
<dbReference type="PANTHER" id="PTHR31332:SF6">
    <property type="entry name" value="FORMATE DEHYDROGENASE SUBUNIT BETA"/>
    <property type="match status" value="1"/>
</dbReference>
<dbReference type="Pfam" id="PF13183">
    <property type="entry name" value="Fer4_8"/>
    <property type="match status" value="1"/>
</dbReference>
<dbReference type="Pfam" id="PF04432">
    <property type="entry name" value="FrhB_FdhB_C"/>
    <property type="match status" value="1"/>
</dbReference>
<dbReference type="Pfam" id="PF04422">
    <property type="entry name" value="FrhB_FdhB_N"/>
    <property type="match status" value="1"/>
</dbReference>
<dbReference type="SUPFAM" id="SSF46548">
    <property type="entry name" value="alpha-helical ferredoxin"/>
    <property type="match status" value="1"/>
</dbReference>
<dbReference type="PROSITE" id="PS00198">
    <property type="entry name" value="4FE4S_FER_1"/>
    <property type="match status" value="2"/>
</dbReference>
<dbReference type="PROSITE" id="PS51379">
    <property type="entry name" value="4FE4S_FER_2"/>
    <property type="match status" value="2"/>
</dbReference>
<sequence length="375" mass="42431">MSYYLVQSTDEDILKHAECGGAVTAFFKYLLDKKLVDGVLALKKGEDVYDGLPYLVNDSKELVETCGSLHCAPTMFGNMISKHLKDMNLAVSVKPCDAMAIVELEKRHQIDKDKLYTIGLNCGGTVPPQTAKKMIELFYDVDPEDVIKEEIDKGKFIIELKDGSEKSVKIDELEEEGYGRRTNCQRCELKVPRNSDLACGNWGTEKGWTFVEVGSEKGEELLKNAQKEGYINVKAPSEKALEIRGKIEKSMINLGKKFQKEQLDEKYPEPEKWDEYWSRCIKCYGCRDVCPICFCKECALGEDYLDKGTIPPDPIMFQGIRLSHMSFSCINCGQCEDVCPVEIPLAKIYHRAQLKIRETTGFVPGIDDSMPFLYK</sequence>
<accession>F1SVF6</accession>
<keyword id="KW-0004">4Fe-4S</keyword>
<keyword id="KW-0249">Electron transport</keyword>
<keyword id="KW-0274">FAD</keyword>
<keyword id="KW-0285">Flavoprotein</keyword>
<keyword id="KW-0408">Iron</keyword>
<keyword id="KW-0411">Iron-sulfur</keyword>
<keyword id="KW-0479">Metal-binding</keyword>
<keyword id="KW-0560">Oxidoreductase</keyword>
<keyword id="KW-1185">Reference proteome</keyword>
<keyword id="KW-0677">Repeat</keyword>
<keyword id="KW-0813">Transport</keyword>
<keyword id="KW-0862">Zinc</keyword>
<organism>
    <name type="scientific">Methanococcus maripaludis (strain DSM 14266 / JCM 13030 / NBRC 101832 / S2 / LL)</name>
    <dbReference type="NCBI Taxonomy" id="267377"/>
    <lineage>
        <taxon>Archaea</taxon>
        <taxon>Methanobacteriati</taxon>
        <taxon>Methanobacteriota</taxon>
        <taxon>Methanomada group</taxon>
        <taxon>Methanococci</taxon>
        <taxon>Methanococcales</taxon>
        <taxon>Methanococcaceae</taxon>
        <taxon>Methanococcus</taxon>
    </lineage>
</organism>
<name>FDHB2_METMP</name>
<comment type="function">
    <text evidence="3">Catalyzes the oxidation of formate to carbon dioxide, with coenzyme F420 as the electron acceptor (PubMed:18791018). In vitro can also use methyl viologen as electron acceptor (PubMed:18791018).</text>
</comment>
<comment type="catalytic activity">
    <reaction evidence="7">
        <text>oxidized coenzyme F420-(gamma-L-Glu)(n) + formate + 2 H(+) = reduced coenzyme F420-(gamma-L-Glu)(n) + CO2</text>
        <dbReference type="Rhea" id="RHEA:42764"/>
        <dbReference type="Rhea" id="RHEA-COMP:12939"/>
        <dbReference type="Rhea" id="RHEA-COMP:14378"/>
        <dbReference type="ChEBI" id="CHEBI:15378"/>
        <dbReference type="ChEBI" id="CHEBI:15740"/>
        <dbReference type="ChEBI" id="CHEBI:16526"/>
        <dbReference type="ChEBI" id="CHEBI:133980"/>
        <dbReference type="ChEBI" id="CHEBI:139511"/>
        <dbReference type="EC" id="1.17.98.3"/>
    </reaction>
</comment>
<comment type="cofactor">
    <cofactor evidence="2">
        <name>[4Fe-4S] cluster</name>
        <dbReference type="ChEBI" id="CHEBI:49883"/>
    </cofactor>
    <text evidence="2">Binds 2 [4Fe-4S] clusters.</text>
</comment>
<comment type="cofactor">
    <cofactor evidence="1">
        <name>FAD</name>
        <dbReference type="ChEBI" id="CHEBI:57692"/>
    </cofactor>
</comment>
<comment type="cofactor">
    <cofactor evidence="1">
        <name>Zn(2+)</name>
        <dbReference type="ChEBI" id="CHEBI:29105"/>
    </cofactor>
</comment>
<comment type="subunit">
    <text evidence="1">Dimer of an alpha (FdhA2) and a beta (FdhB2) subunit.</text>
</comment>
<comment type="induction">
    <text evidence="4">Expression is induced by formate limitation.</text>
</comment>
<comment type="miscellaneous">
    <text evidence="3">The genome of M.maripaludis harbors two sets of genes encoding the F420-dependent formate dehydrogenase (Fdh), fdhA1-fdhB1 (Fdh1 isozyme) and fdhA2-fdhB2 (Fdh2 isozyme) (PubMed:18791018). The Fdh1 isozyme is the primary Fdh and the Fdh2 isozyme may not play a major role (PubMed:18791018).</text>
</comment>
<comment type="similarity">
    <text evidence="6">Belongs to the FrhB family.</text>
</comment>
<proteinExistence type="evidence at protein level"/>
<gene>
    <name evidence="5" type="primary">fdhB2</name>
    <name evidence="8" type="ordered locus">MMP0139</name>
</gene>
<feature type="chain" id="PRO_0000461130" description="F420-dependent formate dehydrogenase 2 subunit beta">
    <location>
        <begin position="1"/>
        <end position="375"/>
    </location>
</feature>
<feature type="domain" description="4Fe-4S ferredoxin-type 1" evidence="2">
    <location>
        <begin position="268"/>
        <end position="291"/>
    </location>
</feature>
<feature type="domain" description="4Fe-4S ferredoxin-type 2" evidence="2">
    <location>
        <begin position="320"/>
        <end position="349"/>
    </location>
</feature>
<feature type="binding site" evidence="2">
    <location>
        <position position="280"/>
    </location>
    <ligand>
        <name>[4Fe-4S] cluster</name>
        <dbReference type="ChEBI" id="CHEBI:49883"/>
        <label>1</label>
    </ligand>
</feature>
<feature type="binding site" evidence="2">
    <location>
        <position position="283"/>
    </location>
    <ligand>
        <name>[4Fe-4S] cluster</name>
        <dbReference type="ChEBI" id="CHEBI:49883"/>
        <label>1</label>
    </ligand>
</feature>
<feature type="binding site" evidence="2">
    <location>
        <position position="286"/>
    </location>
    <ligand>
        <name>[4Fe-4S] cluster</name>
        <dbReference type="ChEBI" id="CHEBI:49883"/>
        <label>1</label>
    </ligand>
</feature>
<feature type="binding site" evidence="2">
    <location>
        <position position="290"/>
    </location>
    <ligand>
        <name>[4Fe-4S] cluster</name>
        <dbReference type="ChEBI" id="CHEBI:49883"/>
        <label>2</label>
    </ligand>
</feature>
<feature type="binding site" evidence="2">
    <location>
        <position position="329"/>
    </location>
    <ligand>
        <name>[4Fe-4S] cluster</name>
        <dbReference type="ChEBI" id="CHEBI:49883"/>
        <label>2</label>
    </ligand>
</feature>
<feature type="binding site" evidence="2">
    <location>
        <position position="332"/>
    </location>
    <ligand>
        <name>[4Fe-4S] cluster</name>
        <dbReference type="ChEBI" id="CHEBI:49883"/>
        <label>2</label>
    </ligand>
</feature>
<feature type="binding site" evidence="2">
    <location>
        <position position="335"/>
    </location>
    <ligand>
        <name>[4Fe-4S] cluster</name>
        <dbReference type="ChEBI" id="CHEBI:49883"/>
        <label>2</label>
    </ligand>
</feature>
<feature type="binding site" evidence="2">
    <location>
        <position position="339"/>
    </location>
    <ligand>
        <name>[4Fe-4S] cluster</name>
        <dbReference type="ChEBI" id="CHEBI:49883"/>
        <label>1</label>
    </ligand>
</feature>
<reference key="1">
    <citation type="journal article" date="2004" name="J. Bacteriol.">
        <title>Complete genome sequence of the genetically tractable hydrogenotrophic methanogen Methanococcus maripaludis.</title>
        <authorList>
            <person name="Hendrickson E.L."/>
            <person name="Kaul R."/>
            <person name="Zhou Y."/>
            <person name="Bovee D."/>
            <person name="Chapman P."/>
            <person name="Chung J."/>
            <person name="Conway de Macario E."/>
            <person name="Dodsworth J.A."/>
            <person name="Gillett W."/>
            <person name="Graham D.E."/>
            <person name="Hackett M."/>
            <person name="Haydock A.K."/>
            <person name="Kang A."/>
            <person name="Land M.L."/>
            <person name="Levy R."/>
            <person name="Lie T.J."/>
            <person name="Major T.A."/>
            <person name="Moore B.C."/>
            <person name="Porat I."/>
            <person name="Palmeiri A."/>
            <person name="Rouse G."/>
            <person name="Saenphimmachak C."/>
            <person name="Soell D."/>
            <person name="Van Dien S."/>
            <person name="Wang T."/>
            <person name="Whitman W.B."/>
            <person name="Xia Q."/>
            <person name="Zhang Y."/>
            <person name="Larimer F.W."/>
            <person name="Olson M.V."/>
            <person name="Leigh J.A."/>
        </authorList>
    </citation>
    <scope>NUCLEOTIDE SEQUENCE [LARGE SCALE GENOMIC DNA]</scope>
    <source>
        <strain>DSM 14266 / JCM 13030 / NBRC 101832 / S2 / LL</strain>
    </source>
</reference>
<reference key="2">
    <citation type="journal article" date="2008" name="Appl. Environ. Microbiol.">
        <title>Formate-dependent H2 production by the mesophilic methanogen Methanococcus maripaludis.</title>
        <authorList>
            <person name="Lupa B."/>
            <person name="Hendrickson E.L."/>
            <person name="Leigh J.A."/>
            <person name="Whitman W.B."/>
        </authorList>
    </citation>
    <scope>FUNCTION AS A FORMATE DEHYDROGENASE</scope>
    <source>
        <strain>DSM 14266 / JCM 13030 / NBRC 101832 / S2 / LL</strain>
    </source>
</reference>
<reference key="3">
    <citation type="journal article" date="2013" name="J. Bacteriol.">
        <title>Effects of H2 and formate on growth yield and regulation of methanogenesis in Methanococcus maripaludis.</title>
        <authorList>
            <person name="Costa K.C."/>
            <person name="Yoon S.H."/>
            <person name="Pan M."/>
            <person name="Burn J.A."/>
            <person name="Baliga N.S."/>
            <person name="Leigh J.A."/>
        </authorList>
    </citation>
    <scope>INDUCTION</scope>
</reference>
<protein>
    <recommendedName>
        <fullName evidence="6">F420-dependent formate dehydrogenase 2 subunit beta</fullName>
        <shortName evidence="6">Fdh2 subunit beta</shortName>
        <ecNumber evidence="7">1.17.98.3</ecNumber>
    </recommendedName>
</protein>